<sequence length="312" mass="32685">MNQKLKVAIIGSGNIGTDLMIKVLRNAKYLEMGAMVGIDAASDGLARAQRMGVTTTYAGVEGLIKLPEFADIDFVFDATSASAHVQNEALLRQAKPGIRLIDLTPAAIGPYCVPVVNLEEHLGKLNVNMVTCGGQATIPMVAAVSRVAKVHYAEIVASISSKSAGPGTRANIDEFTETTSKAIEVIGGAAKGKAIIIMNPAEPPLIMRDTVYVLSAAADQAAVAASVAEMVQAVQAYVPGYRLKQQVQFDVIPESAPLNIPGLGRFSGLKTSVFLEVEGAAHYLPAYAGNLDIMTSAALATAERMAQSMLNA</sequence>
<name>ACDH_PSEUF</name>
<geneLocation type="plasmid">
    <name>pVI150</name>
</geneLocation>
<evidence type="ECO:0000255" key="1">
    <source>
        <dbReference type="HAMAP-Rule" id="MF_01657"/>
    </source>
</evidence>
<evidence type="ECO:0000269" key="2">
    <source>
    </source>
</evidence>
<evidence type="ECO:0000269" key="3">
    <source>
    </source>
</evidence>
<evidence type="ECO:0000269" key="4">
    <source>
    </source>
</evidence>
<evidence type="ECO:0000305" key="5"/>
<evidence type="ECO:0007829" key="6">
    <source>
        <dbReference type="PDB" id="1NVM"/>
    </source>
</evidence>
<gene>
    <name type="primary">dmpF</name>
</gene>
<accession>Q52060</accession>
<proteinExistence type="evidence at protein level"/>
<comment type="function">
    <text evidence="3">Catalyzes the conversion of acetaldehyde to acetyl-CoA, using NAD(+) and coenzyme A. Can also act on propanal and butanal to form propanoyl-CoA and butanoyl-CoA, respectively. Is the final enzyme in the meta-cleavage pathway for the degradation of aromatic compounds such as phenols, cresols and catechols. NADP(+) can replace NAD(+) but the rate of reaction is much slower.</text>
</comment>
<comment type="catalytic activity">
    <reaction evidence="1 4">
        <text>acetaldehyde + NAD(+) + CoA = acetyl-CoA + NADH + H(+)</text>
        <dbReference type="Rhea" id="RHEA:23288"/>
        <dbReference type="ChEBI" id="CHEBI:15343"/>
        <dbReference type="ChEBI" id="CHEBI:15378"/>
        <dbReference type="ChEBI" id="CHEBI:57287"/>
        <dbReference type="ChEBI" id="CHEBI:57288"/>
        <dbReference type="ChEBI" id="CHEBI:57540"/>
        <dbReference type="ChEBI" id="CHEBI:57945"/>
        <dbReference type="EC" id="1.2.1.10"/>
    </reaction>
</comment>
<comment type="activity regulation">
    <text evidence="4">Is not activated by Mn(2+), Mg(2+), Ca(2+), Zn(2+) or Co(2+).</text>
</comment>
<comment type="biophysicochemical properties">
    <phDependence>
        <text evidence="4">Activity increases gradually over the pH range 6.5-8.5.</text>
    </phDependence>
</comment>
<comment type="pathway">
    <text>Aromatic compound metabolism; phenol degradation.</text>
</comment>
<comment type="subunit">
    <text evidence="2 4">Heterotetramer composed of two DmpG (aldolase) and two DmpF (dehydrogenase) subunits, which allows a direct channeling of acetaldehyde between the two active sites.</text>
</comment>
<comment type="similarity">
    <text evidence="1 5">Belongs to the acetaldehyde dehydrogenase family.</text>
</comment>
<protein>
    <recommendedName>
        <fullName evidence="1">Acetaldehyde dehydrogenase</fullName>
        <ecNumber evidence="1">1.2.1.10</ecNumber>
    </recommendedName>
    <alternativeName>
        <fullName evidence="1">Acetaldehyde dehydrogenase [acetylating]</fullName>
    </alternativeName>
</protein>
<dbReference type="EC" id="1.2.1.10" evidence="1"/>
<dbReference type="EMBL" id="X60835">
    <property type="protein sequence ID" value="CAA43226.1"/>
    <property type="molecule type" value="Genomic_DNA"/>
</dbReference>
<dbReference type="PIR" id="S24419">
    <property type="entry name" value="S24419"/>
</dbReference>
<dbReference type="PDB" id="1NVM">
    <property type="method" value="X-ray"/>
    <property type="resolution" value="1.70 A"/>
    <property type="chains" value="B/D/F/H=1-312"/>
</dbReference>
<dbReference type="PDBsum" id="1NVM"/>
<dbReference type="SMR" id="Q52060"/>
<dbReference type="IntAct" id="Q52060">
    <property type="interactions" value="1"/>
</dbReference>
<dbReference type="KEGG" id="ag:CAA43226"/>
<dbReference type="BioCyc" id="MetaCyc:MONOMER-12780"/>
<dbReference type="BRENDA" id="1.2.1.10">
    <property type="organism ID" value="5085"/>
</dbReference>
<dbReference type="UniPathway" id="UPA00728"/>
<dbReference type="EvolutionaryTrace" id="Q52060"/>
<dbReference type="GO" id="GO:0008774">
    <property type="term" value="F:acetaldehyde dehydrogenase (acetylating) activity"/>
    <property type="evidence" value="ECO:0000314"/>
    <property type="project" value="UniProtKB"/>
</dbReference>
<dbReference type="GO" id="GO:0051287">
    <property type="term" value="F:NAD binding"/>
    <property type="evidence" value="ECO:0000314"/>
    <property type="project" value="UniProtKB"/>
</dbReference>
<dbReference type="GO" id="GO:0050661">
    <property type="term" value="F:NADP binding"/>
    <property type="evidence" value="ECO:0000314"/>
    <property type="project" value="UniProtKB"/>
</dbReference>
<dbReference type="GO" id="GO:0019336">
    <property type="term" value="P:phenol-containing compound catabolic process"/>
    <property type="evidence" value="ECO:0007669"/>
    <property type="project" value="UniProtKB-UniPathway"/>
</dbReference>
<dbReference type="CDD" id="cd23933">
    <property type="entry name" value="ALDH_C"/>
    <property type="match status" value="1"/>
</dbReference>
<dbReference type="FunFam" id="3.30.360.10:FF:000021">
    <property type="entry name" value="Acetaldehyde dehydrogenase"/>
    <property type="match status" value="1"/>
</dbReference>
<dbReference type="Gene3D" id="3.30.360.10">
    <property type="entry name" value="Dihydrodipicolinate Reductase, domain 2"/>
    <property type="match status" value="1"/>
</dbReference>
<dbReference type="Gene3D" id="3.40.50.720">
    <property type="entry name" value="NAD(P)-binding Rossmann-like Domain"/>
    <property type="match status" value="1"/>
</dbReference>
<dbReference type="HAMAP" id="MF_01657">
    <property type="entry name" value="Ac_ald_DH_ac"/>
    <property type="match status" value="1"/>
</dbReference>
<dbReference type="InterPro" id="IPR003361">
    <property type="entry name" value="Acetaldehyde_dehydrogenase"/>
</dbReference>
<dbReference type="InterPro" id="IPR015426">
    <property type="entry name" value="Acetylaldehyde_DH_C"/>
</dbReference>
<dbReference type="InterPro" id="IPR036291">
    <property type="entry name" value="NAD(P)-bd_dom_sf"/>
</dbReference>
<dbReference type="InterPro" id="IPR000534">
    <property type="entry name" value="Semialdehyde_DH_NAD-bd"/>
</dbReference>
<dbReference type="NCBIfam" id="TIGR03215">
    <property type="entry name" value="ac_ald_DH_ac"/>
    <property type="match status" value="1"/>
</dbReference>
<dbReference type="NCBIfam" id="NF006157">
    <property type="entry name" value="PRK08300.1"/>
    <property type="match status" value="1"/>
</dbReference>
<dbReference type="Pfam" id="PF09290">
    <property type="entry name" value="AcetDehyd-dimer"/>
    <property type="match status" value="1"/>
</dbReference>
<dbReference type="Pfam" id="PF01118">
    <property type="entry name" value="Semialdhyde_dh"/>
    <property type="match status" value="1"/>
</dbReference>
<dbReference type="PIRSF" id="PIRSF015689">
    <property type="entry name" value="Actaldh_dh_actl"/>
    <property type="match status" value="1"/>
</dbReference>
<dbReference type="SMART" id="SM00859">
    <property type="entry name" value="Semialdhyde_dh"/>
    <property type="match status" value="1"/>
</dbReference>
<dbReference type="SUPFAM" id="SSF55347">
    <property type="entry name" value="Glyceraldehyde-3-phosphate dehydrogenase-like, C-terminal domain"/>
    <property type="match status" value="1"/>
</dbReference>
<dbReference type="SUPFAM" id="SSF51735">
    <property type="entry name" value="NAD(P)-binding Rossmann-fold domains"/>
    <property type="match status" value="1"/>
</dbReference>
<keyword id="KW-0002">3D-structure</keyword>
<keyword id="KW-0058">Aromatic hydrocarbons catabolism</keyword>
<keyword id="KW-0903">Direct protein sequencing</keyword>
<keyword id="KW-0520">NAD</keyword>
<keyword id="KW-0560">Oxidoreductase</keyword>
<keyword id="KW-0614">Plasmid</keyword>
<reference key="1">
    <citation type="journal article" date="1992" name="J. Bacteriol.">
        <title>Nucleotide sequence and functional analysis of the complete phenol/3,4-dimethylphenol catabolic pathway of Pseudomonas sp. strain CF600.</title>
        <authorList>
            <person name="Shingler V."/>
            <person name="Marklund U."/>
            <person name="Powlowski J."/>
        </authorList>
    </citation>
    <scope>NUCLEOTIDE SEQUENCE [GENOMIC DNA]</scope>
    <scope>FUNCTION</scope>
    <source>
        <strain>CF600</strain>
    </source>
</reference>
<reference key="2">
    <citation type="journal article" date="1993" name="J. Bacteriol.">
        <title>Purification and properties of the physically associated meta-cleavage pathway enzymes 4-hydroxy-2-ketovalerate aldolase and aldehyde dehydrogenase (acylating) from Pseudomonas sp. strain CF600.</title>
        <authorList>
            <person name="Powlowski J."/>
            <person name="Sahlman L."/>
            <person name="Shingler V."/>
        </authorList>
    </citation>
    <scope>PROTEIN SEQUENCE OF 1-6</scope>
    <scope>CATALYTIC ACTIVITY</scope>
    <scope>SUBSTRATE SPECIFICITY</scope>
    <scope>ACTIVITY REGULATION</scope>
    <scope>SUBUNIT</scope>
    <scope>INTERACTION WITH DMPG</scope>
    <scope>PH DEPENDENCE</scope>
    <source>
        <strain>CF600</strain>
    </source>
</reference>
<reference key="3">
    <citation type="journal article" date="2003" name="Proc. Natl. Acad. Sci. U.S.A.">
        <title>Crystal structure of a bifunctional aldolase-dehydrogenase: sequestering a reactive and volatile intermediate.</title>
        <authorList>
            <person name="Manjasetty B.A."/>
            <person name="Powlowski J."/>
            <person name="Vrielink A."/>
        </authorList>
    </citation>
    <scope>X-RAY CRYSTALLOGRAPHY (1.7 ANGSTROMS) IN COMPLEX WITH DMPG AND NAD</scope>
    <scope>SUBUNIT</scope>
    <scope>REACTION MECHANISM</scope>
    <source>
        <strain>CF600</strain>
    </source>
</reference>
<organism>
    <name type="scientific">Pseudomonas sp. (strain CF600)</name>
    <dbReference type="NCBI Taxonomy" id="79676"/>
    <lineage>
        <taxon>Bacteria</taxon>
        <taxon>Pseudomonadati</taxon>
        <taxon>Pseudomonadota</taxon>
    </lineage>
</organism>
<feature type="chain" id="PRO_0000404201" description="Acetaldehyde dehydrogenase">
    <location>
        <begin position="1"/>
        <end position="312"/>
    </location>
</feature>
<feature type="active site" description="Acyl-thioester intermediate" evidence="1">
    <location>
        <position position="132"/>
    </location>
</feature>
<feature type="binding site" evidence="1 2">
    <location>
        <begin position="12"/>
        <end position="15"/>
    </location>
    <ligand>
        <name>NAD(+)</name>
        <dbReference type="ChEBI" id="CHEBI:57540"/>
    </ligand>
</feature>
<feature type="binding site" evidence="1 2">
    <location>
        <begin position="163"/>
        <end position="171"/>
    </location>
    <ligand>
        <name>NAD(+)</name>
        <dbReference type="ChEBI" id="CHEBI:57540"/>
    </ligand>
</feature>
<feature type="binding site" evidence="1 2">
    <location>
        <position position="290"/>
    </location>
    <ligand>
        <name>NAD(+)</name>
        <dbReference type="ChEBI" id="CHEBI:57540"/>
    </ligand>
</feature>
<feature type="strand" evidence="6">
    <location>
        <begin position="5"/>
        <end position="10"/>
    </location>
</feature>
<feature type="helix" evidence="6">
    <location>
        <begin position="14"/>
        <end position="26"/>
    </location>
</feature>
<feature type="strand" evidence="6">
    <location>
        <begin position="28"/>
        <end position="36"/>
    </location>
</feature>
<feature type="helix" evidence="6">
    <location>
        <begin position="43"/>
        <end position="50"/>
    </location>
</feature>
<feature type="strand" evidence="6">
    <location>
        <begin position="55"/>
        <end position="58"/>
    </location>
</feature>
<feature type="helix" evidence="6">
    <location>
        <begin position="59"/>
        <end position="65"/>
    </location>
</feature>
<feature type="helix" evidence="6">
    <location>
        <begin position="67"/>
        <end position="71"/>
    </location>
</feature>
<feature type="strand" evidence="6">
    <location>
        <begin position="72"/>
        <end position="77"/>
    </location>
</feature>
<feature type="helix" evidence="6">
    <location>
        <begin position="81"/>
        <end position="94"/>
    </location>
</feature>
<feature type="strand" evidence="6">
    <location>
        <begin position="99"/>
        <end position="102"/>
    </location>
</feature>
<feature type="helix" evidence="6">
    <location>
        <begin position="114"/>
        <end position="117"/>
    </location>
</feature>
<feature type="turn" evidence="6">
    <location>
        <begin position="118"/>
        <end position="123"/>
    </location>
</feature>
<feature type="strand" evidence="6">
    <location>
        <begin position="125"/>
        <end position="128"/>
    </location>
</feature>
<feature type="helix" evidence="6">
    <location>
        <begin position="132"/>
        <end position="145"/>
    </location>
</feature>
<feature type="strand" evidence="6">
    <location>
        <begin position="150"/>
        <end position="160"/>
    </location>
</feature>
<feature type="helix" evidence="6">
    <location>
        <begin position="161"/>
        <end position="163"/>
    </location>
</feature>
<feature type="helix" evidence="6">
    <location>
        <begin position="166"/>
        <end position="169"/>
    </location>
</feature>
<feature type="helix" evidence="6">
    <location>
        <begin position="172"/>
        <end position="185"/>
    </location>
</feature>
<feature type="strand" evidence="6">
    <location>
        <begin position="190"/>
        <end position="199"/>
    </location>
</feature>
<feature type="strand" evidence="6">
    <location>
        <begin position="207"/>
        <end position="217"/>
    </location>
</feature>
<feature type="helix" evidence="6">
    <location>
        <begin position="220"/>
        <end position="235"/>
    </location>
</feature>
<feature type="strand" evidence="6">
    <location>
        <begin position="241"/>
        <end position="245"/>
    </location>
</feature>
<feature type="strand" evidence="6">
    <location>
        <begin position="248"/>
        <end position="252"/>
    </location>
</feature>
<feature type="strand" evidence="6">
    <location>
        <begin position="258"/>
        <end position="260"/>
    </location>
</feature>
<feature type="turn" evidence="6">
    <location>
        <begin position="261"/>
        <end position="263"/>
    </location>
</feature>
<feature type="strand" evidence="6">
    <location>
        <begin position="264"/>
        <end position="266"/>
    </location>
</feature>
<feature type="strand" evidence="6">
    <location>
        <begin position="268"/>
        <end position="277"/>
    </location>
</feature>
<feature type="strand" evidence="6">
    <location>
        <begin position="282"/>
        <end position="284"/>
    </location>
</feature>
<feature type="helix" evidence="6">
    <location>
        <begin position="289"/>
        <end position="310"/>
    </location>
</feature>